<accession>Q3Z5T9</accession>
<comment type="function">
    <text evidence="1">Catalyzes the isomerization between 2-isopropylmalate and 3-isopropylmalate, via the formation of 2-isopropylmaleate.</text>
</comment>
<comment type="catalytic activity">
    <reaction evidence="1">
        <text>(2R,3S)-3-isopropylmalate = (2S)-2-isopropylmalate</text>
        <dbReference type="Rhea" id="RHEA:32287"/>
        <dbReference type="ChEBI" id="CHEBI:1178"/>
        <dbReference type="ChEBI" id="CHEBI:35121"/>
        <dbReference type="EC" id="4.2.1.33"/>
    </reaction>
</comment>
<comment type="pathway">
    <text evidence="1">Amino-acid biosynthesis; L-leucine biosynthesis; L-leucine from 3-methyl-2-oxobutanoate: step 2/4.</text>
</comment>
<comment type="subunit">
    <text evidence="1">Heterodimer of LeuC and LeuD.</text>
</comment>
<comment type="similarity">
    <text evidence="1">Belongs to the LeuD family. LeuD type 1 subfamily.</text>
</comment>
<keyword id="KW-0028">Amino-acid biosynthesis</keyword>
<keyword id="KW-0100">Branched-chain amino acid biosynthesis</keyword>
<keyword id="KW-0432">Leucine biosynthesis</keyword>
<keyword id="KW-0456">Lyase</keyword>
<keyword id="KW-1185">Reference proteome</keyword>
<name>LEUD_SHISS</name>
<gene>
    <name evidence="1" type="primary">leuD</name>
    <name type="ordered locus">SSON_0078</name>
</gene>
<dbReference type="EC" id="4.2.1.33" evidence="1"/>
<dbReference type="EMBL" id="CP000038">
    <property type="protein sequence ID" value="AAZ86873.1"/>
    <property type="molecule type" value="Genomic_DNA"/>
</dbReference>
<dbReference type="RefSeq" id="WP_000818228.1">
    <property type="nucleotide sequence ID" value="NC_007384.1"/>
</dbReference>
<dbReference type="SMR" id="Q3Z5T9"/>
<dbReference type="GeneID" id="93777364"/>
<dbReference type="KEGG" id="ssn:SSON_0078"/>
<dbReference type="HOGENOM" id="CLU_081378_0_3_6"/>
<dbReference type="UniPathway" id="UPA00048">
    <property type="reaction ID" value="UER00071"/>
</dbReference>
<dbReference type="Proteomes" id="UP000002529">
    <property type="component" value="Chromosome"/>
</dbReference>
<dbReference type="GO" id="GO:0009316">
    <property type="term" value="C:3-isopropylmalate dehydratase complex"/>
    <property type="evidence" value="ECO:0007669"/>
    <property type="project" value="InterPro"/>
</dbReference>
<dbReference type="GO" id="GO:0003861">
    <property type="term" value="F:3-isopropylmalate dehydratase activity"/>
    <property type="evidence" value="ECO:0007669"/>
    <property type="project" value="UniProtKB-UniRule"/>
</dbReference>
<dbReference type="GO" id="GO:0009098">
    <property type="term" value="P:L-leucine biosynthetic process"/>
    <property type="evidence" value="ECO:0007669"/>
    <property type="project" value="UniProtKB-UniRule"/>
</dbReference>
<dbReference type="CDD" id="cd01577">
    <property type="entry name" value="IPMI_Swivel"/>
    <property type="match status" value="1"/>
</dbReference>
<dbReference type="FunFam" id="3.20.19.10:FF:000003">
    <property type="entry name" value="3-isopropylmalate dehydratase small subunit"/>
    <property type="match status" value="1"/>
</dbReference>
<dbReference type="Gene3D" id="3.20.19.10">
    <property type="entry name" value="Aconitase, domain 4"/>
    <property type="match status" value="1"/>
</dbReference>
<dbReference type="HAMAP" id="MF_01031">
    <property type="entry name" value="LeuD_type1"/>
    <property type="match status" value="1"/>
</dbReference>
<dbReference type="InterPro" id="IPR004431">
    <property type="entry name" value="3-IsopropMal_deHydase_ssu"/>
</dbReference>
<dbReference type="InterPro" id="IPR015928">
    <property type="entry name" value="Aconitase/3IPM_dehydase_swvl"/>
</dbReference>
<dbReference type="InterPro" id="IPR000573">
    <property type="entry name" value="AconitaseA/IPMdHydase_ssu_swvl"/>
</dbReference>
<dbReference type="InterPro" id="IPR033940">
    <property type="entry name" value="IPMI_Swivel"/>
</dbReference>
<dbReference type="InterPro" id="IPR050075">
    <property type="entry name" value="LeuD"/>
</dbReference>
<dbReference type="NCBIfam" id="TIGR00171">
    <property type="entry name" value="leuD"/>
    <property type="match status" value="1"/>
</dbReference>
<dbReference type="NCBIfam" id="NF002458">
    <property type="entry name" value="PRK01641.1"/>
    <property type="match status" value="1"/>
</dbReference>
<dbReference type="PANTHER" id="PTHR43345:SF5">
    <property type="entry name" value="3-ISOPROPYLMALATE DEHYDRATASE SMALL SUBUNIT"/>
    <property type="match status" value="1"/>
</dbReference>
<dbReference type="PANTHER" id="PTHR43345">
    <property type="entry name" value="3-ISOPROPYLMALATE DEHYDRATASE SMALL SUBUNIT 2-RELATED-RELATED"/>
    <property type="match status" value="1"/>
</dbReference>
<dbReference type="Pfam" id="PF00694">
    <property type="entry name" value="Aconitase_C"/>
    <property type="match status" value="1"/>
</dbReference>
<dbReference type="SUPFAM" id="SSF52016">
    <property type="entry name" value="LeuD/IlvD-like"/>
    <property type="match status" value="1"/>
</dbReference>
<feature type="chain" id="PRO_0000141881" description="3-isopropylmalate dehydratase small subunit">
    <location>
        <begin position="1"/>
        <end position="201"/>
    </location>
</feature>
<sequence length="201" mass="22487">MAEKFIKHTGLVVPLDAANVDTDAIIPKQFLQKVTRTGFGAHLFNDWRFLDEKGQQPNPDFVLNFPQYQGASILLARENFGCGSSREHAPWALTDYGFKVVIAPSFADIFYGNSFNNQLLPVKLSDAEVDELFALVKANPGIHFDVDLEAQEVKAGEKTYRFTIDAFRRHCMMNGLDSIGLTLQHDDAIAAYEAKQPAFMN</sequence>
<protein>
    <recommendedName>
        <fullName evidence="1">3-isopropylmalate dehydratase small subunit</fullName>
        <ecNumber evidence="1">4.2.1.33</ecNumber>
    </recommendedName>
    <alternativeName>
        <fullName evidence="1">Alpha-IPM isomerase</fullName>
        <shortName evidence="1">IPMI</shortName>
    </alternativeName>
    <alternativeName>
        <fullName evidence="1">Isopropylmalate isomerase</fullName>
    </alternativeName>
</protein>
<evidence type="ECO:0000255" key="1">
    <source>
        <dbReference type="HAMAP-Rule" id="MF_01031"/>
    </source>
</evidence>
<reference key="1">
    <citation type="journal article" date="2005" name="Nucleic Acids Res.">
        <title>Genome dynamics and diversity of Shigella species, the etiologic agents of bacillary dysentery.</title>
        <authorList>
            <person name="Yang F."/>
            <person name="Yang J."/>
            <person name="Zhang X."/>
            <person name="Chen L."/>
            <person name="Jiang Y."/>
            <person name="Yan Y."/>
            <person name="Tang X."/>
            <person name="Wang J."/>
            <person name="Xiong Z."/>
            <person name="Dong J."/>
            <person name="Xue Y."/>
            <person name="Zhu Y."/>
            <person name="Xu X."/>
            <person name="Sun L."/>
            <person name="Chen S."/>
            <person name="Nie H."/>
            <person name="Peng J."/>
            <person name="Xu J."/>
            <person name="Wang Y."/>
            <person name="Yuan Z."/>
            <person name="Wen Y."/>
            <person name="Yao Z."/>
            <person name="Shen Y."/>
            <person name="Qiang B."/>
            <person name="Hou Y."/>
            <person name="Yu J."/>
            <person name="Jin Q."/>
        </authorList>
    </citation>
    <scope>NUCLEOTIDE SEQUENCE [LARGE SCALE GENOMIC DNA]</scope>
    <source>
        <strain>Ss046</strain>
    </source>
</reference>
<proteinExistence type="inferred from homology"/>
<organism>
    <name type="scientific">Shigella sonnei (strain Ss046)</name>
    <dbReference type="NCBI Taxonomy" id="300269"/>
    <lineage>
        <taxon>Bacteria</taxon>
        <taxon>Pseudomonadati</taxon>
        <taxon>Pseudomonadota</taxon>
        <taxon>Gammaproteobacteria</taxon>
        <taxon>Enterobacterales</taxon>
        <taxon>Enterobacteriaceae</taxon>
        <taxon>Shigella</taxon>
    </lineage>
</organism>